<protein>
    <recommendedName>
        <fullName evidence="1">Phosphoenolpyruvate guanylyltransferase</fullName>
        <shortName evidence="1">PEP guanylyltransferase</shortName>
        <ecNumber evidence="1">2.7.7.105</ecNumber>
    </recommendedName>
</protein>
<accession>Q73VJ2</accession>
<reference key="1">
    <citation type="journal article" date="2005" name="Proc. Natl. Acad. Sci. U.S.A.">
        <title>The complete genome sequence of Mycobacterium avium subspecies paratuberculosis.</title>
        <authorList>
            <person name="Li L."/>
            <person name="Bannantine J.P."/>
            <person name="Zhang Q."/>
            <person name="Amonsin A."/>
            <person name="May B.J."/>
            <person name="Alt D."/>
            <person name="Banerji N."/>
            <person name="Kanjilal S."/>
            <person name="Kapur V."/>
        </authorList>
    </citation>
    <scope>NUCLEOTIDE SEQUENCE [LARGE SCALE GENOMIC DNA]</scope>
    <source>
        <strain>ATCC BAA-968 / K-10</strain>
    </source>
</reference>
<keyword id="KW-0342">GTP-binding</keyword>
<keyword id="KW-0547">Nucleotide-binding</keyword>
<keyword id="KW-0548">Nucleotidyltransferase</keyword>
<keyword id="KW-1185">Reference proteome</keyword>
<keyword id="KW-0808">Transferase</keyword>
<feature type="chain" id="PRO_0000398694" description="Phosphoenolpyruvate guanylyltransferase">
    <location>
        <begin position="1"/>
        <end position="220"/>
    </location>
</feature>
<feature type="binding site" evidence="1">
    <location>
        <position position="154"/>
    </location>
    <ligand>
        <name>phosphoenolpyruvate</name>
        <dbReference type="ChEBI" id="CHEBI:58702"/>
    </ligand>
</feature>
<feature type="binding site" evidence="1">
    <location>
        <position position="169"/>
    </location>
    <ligand>
        <name>phosphoenolpyruvate</name>
        <dbReference type="ChEBI" id="CHEBI:58702"/>
    </ligand>
</feature>
<feature type="binding site" evidence="1">
    <location>
        <position position="172"/>
    </location>
    <ligand>
        <name>phosphoenolpyruvate</name>
        <dbReference type="ChEBI" id="CHEBI:58702"/>
    </ligand>
</feature>
<sequence length="220" mass="22262">MSGKRADGGHDGAGDVALIIAVKRLAAAKTRLAPVFSARTRESVVLAMLTDTLTAATRVPSLGSITVITPDEAAAAAAAGLGADVLADPTPEGHPDPLNNAIATAERAVSGSFTNIVALQGDLPALQSQELAEAVAAARAHRRSFVADRLATGTAALFAFGTRLDPRFGSDSSARHRSSGAIELTGAWPGLRCDVDTPTDLAAARRLGVGAATARAIAAH</sequence>
<gene>
    <name evidence="1" type="primary">fbiD</name>
    <name type="ordered locus">MAP_3021</name>
</gene>
<evidence type="ECO:0000255" key="1">
    <source>
        <dbReference type="HAMAP-Rule" id="MF_02114"/>
    </source>
</evidence>
<dbReference type="EC" id="2.7.7.105" evidence="1"/>
<dbReference type="EMBL" id="AE016958">
    <property type="protein sequence ID" value="AAS05569.1"/>
    <property type="molecule type" value="Genomic_DNA"/>
</dbReference>
<dbReference type="SMR" id="Q73VJ2"/>
<dbReference type="STRING" id="262316.MAP_3021"/>
<dbReference type="KEGG" id="mpa:MAP_3021"/>
<dbReference type="PATRIC" id="fig|262316.17.peg.3201"/>
<dbReference type="eggNOG" id="COG1920">
    <property type="taxonomic scope" value="Bacteria"/>
</dbReference>
<dbReference type="HOGENOM" id="CLU_076569_0_0_11"/>
<dbReference type="UniPathway" id="UPA00071"/>
<dbReference type="Proteomes" id="UP000000580">
    <property type="component" value="Chromosome"/>
</dbReference>
<dbReference type="GO" id="GO:0005525">
    <property type="term" value="F:GTP binding"/>
    <property type="evidence" value="ECO:0007669"/>
    <property type="project" value="UniProtKB-KW"/>
</dbReference>
<dbReference type="GO" id="GO:0043814">
    <property type="term" value="F:phospholactate guanylyltransferase activity"/>
    <property type="evidence" value="ECO:0007669"/>
    <property type="project" value="InterPro"/>
</dbReference>
<dbReference type="GO" id="GO:0052645">
    <property type="term" value="P:F420-0 metabolic process"/>
    <property type="evidence" value="ECO:0007669"/>
    <property type="project" value="UniProtKB-UniRule"/>
</dbReference>
<dbReference type="Gene3D" id="3.90.550.10">
    <property type="entry name" value="Spore Coat Polysaccharide Biosynthesis Protein SpsA, Chain A"/>
    <property type="match status" value="1"/>
</dbReference>
<dbReference type="HAMAP" id="MF_02114">
    <property type="entry name" value="CofC"/>
    <property type="match status" value="1"/>
</dbReference>
<dbReference type="InterPro" id="IPR002835">
    <property type="entry name" value="CofC"/>
</dbReference>
<dbReference type="InterPro" id="IPR029044">
    <property type="entry name" value="Nucleotide-diphossugar_trans"/>
</dbReference>
<dbReference type="NCBIfam" id="TIGR03552">
    <property type="entry name" value="F420_cofC"/>
    <property type="match status" value="1"/>
</dbReference>
<dbReference type="PANTHER" id="PTHR40392">
    <property type="entry name" value="2-PHOSPHO-L-LACTATE GUANYLYLTRANSFERASE"/>
    <property type="match status" value="1"/>
</dbReference>
<dbReference type="PANTHER" id="PTHR40392:SF1">
    <property type="entry name" value="2-PHOSPHO-L-LACTATE GUANYLYLTRANSFERASE"/>
    <property type="match status" value="1"/>
</dbReference>
<dbReference type="Pfam" id="PF01983">
    <property type="entry name" value="CofC"/>
    <property type="match status" value="1"/>
</dbReference>
<dbReference type="SUPFAM" id="SSF53448">
    <property type="entry name" value="Nucleotide-diphospho-sugar transferases"/>
    <property type="match status" value="1"/>
</dbReference>
<organism>
    <name type="scientific">Mycolicibacterium paratuberculosis (strain ATCC BAA-968 / K-10)</name>
    <name type="common">Mycobacterium paratuberculosis</name>
    <dbReference type="NCBI Taxonomy" id="262316"/>
    <lineage>
        <taxon>Bacteria</taxon>
        <taxon>Bacillati</taxon>
        <taxon>Actinomycetota</taxon>
        <taxon>Actinomycetes</taxon>
        <taxon>Mycobacteriales</taxon>
        <taxon>Mycobacteriaceae</taxon>
        <taxon>Mycobacterium</taxon>
        <taxon>Mycobacterium avium complex (MAC)</taxon>
    </lineage>
</organism>
<name>FBID_MYCPA</name>
<comment type="function">
    <text evidence="1">Guanylyltransferase that catalyzes the activation of phosphoenolpyruvate (PEP) as enolpyruvoyl-2-diphospho-5'-guanosine, via the condensation of PEP with GTP. It is involved in the biosynthesis of coenzyme F420, a hydride carrier cofactor.</text>
</comment>
<comment type="catalytic activity">
    <reaction evidence="1">
        <text>phosphoenolpyruvate + GTP + H(+) = enolpyruvoyl-2-diphospho-5'-guanosine + diphosphate</text>
        <dbReference type="Rhea" id="RHEA:30519"/>
        <dbReference type="ChEBI" id="CHEBI:15378"/>
        <dbReference type="ChEBI" id="CHEBI:33019"/>
        <dbReference type="ChEBI" id="CHEBI:37565"/>
        <dbReference type="ChEBI" id="CHEBI:58702"/>
        <dbReference type="ChEBI" id="CHEBI:143701"/>
        <dbReference type="EC" id="2.7.7.105"/>
    </reaction>
</comment>
<comment type="pathway">
    <text evidence="1">Cofactor biosynthesis; coenzyme F420 biosynthesis.</text>
</comment>
<comment type="similarity">
    <text evidence="1">Belongs to the CofC family.</text>
</comment>
<proteinExistence type="inferred from homology"/>